<comment type="function">
    <text evidence="1">This protein is involved in the repair of mismatches in DNA. It is possible that it carries out the mismatch recognition step. This protein has a weak ATPase activity.</text>
</comment>
<comment type="similarity">
    <text evidence="1">Belongs to the DNA mismatch repair MutS family.</text>
</comment>
<name>MUTS_PSEF5</name>
<feature type="chain" id="PRO_0000224392" description="DNA mismatch repair protein MutS">
    <location>
        <begin position="1"/>
        <end position="859"/>
    </location>
</feature>
<feature type="region of interest" description="Disordered" evidence="2">
    <location>
        <begin position="801"/>
        <end position="820"/>
    </location>
</feature>
<feature type="binding site" evidence="1">
    <location>
        <begin position="617"/>
        <end position="624"/>
    </location>
    <ligand>
        <name>ATP</name>
        <dbReference type="ChEBI" id="CHEBI:30616"/>
    </ligand>
</feature>
<proteinExistence type="inferred from homology"/>
<reference key="1">
    <citation type="journal article" date="2005" name="Nat. Biotechnol.">
        <title>Complete genome sequence of the plant commensal Pseudomonas fluorescens Pf-5.</title>
        <authorList>
            <person name="Paulsen I.T."/>
            <person name="Press C.M."/>
            <person name="Ravel J."/>
            <person name="Kobayashi D.Y."/>
            <person name="Myers G.S.A."/>
            <person name="Mavrodi D.V."/>
            <person name="DeBoy R.T."/>
            <person name="Seshadri R."/>
            <person name="Ren Q."/>
            <person name="Madupu R."/>
            <person name="Dodson R.J."/>
            <person name="Durkin A.S."/>
            <person name="Brinkac L.M."/>
            <person name="Daugherty S.C."/>
            <person name="Sullivan S.A."/>
            <person name="Rosovitz M.J."/>
            <person name="Gwinn M.L."/>
            <person name="Zhou L."/>
            <person name="Schneider D.J."/>
            <person name="Cartinhour S.W."/>
            <person name="Nelson W.C."/>
            <person name="Weidman J."/>
            <person name="Watkins K."/>
            <person name="Tran K."/>
            <person name="Khouri H."/>
            <person name="Pierson E.A."/>
            <person name="Pierson L.S. III"/>
            <person name="Thomashow L.S."/>
            <person name="Loper J.E."/>
        </authorList>
    </citation>
    <scope>NUCLEOTIDE SEQUENCE [LARGE SCALE GENOMIC DNA]</scope>
    <source>
        <strain>ATCC BAA-477 / NRRL B-23932 / Pf-5</strain>
    </source>
</reference>
<organism>
    <name type="scientific">Pseudomonas fluorescens (strain ATCC BAA-477 / NRRL B-23932 / Pf-5)</name>
    <dbReference type="NCBI Taxonomy" id="220664"/>
    <lineage>
        <taxon>Bacteria</taxon>
        <taxon>Pseudomonadati</taxon>
        <taxon>Pseudomonadota</taxon>
        <taxon>Gammaproteobacteria</taxon>
        <taxon>Pseudomonadales</taxon>
        <taxon>Pseudomonadaceae</taxon>
        <taxon>Pseudomonas</taxon>
    </lineage>
</organism>
<protein>
    <recommendedName>
        <fullName evidence="1">DNA mismatch repair protein MutS</fullName>
    </recommendedName>
</protein>
<evidence type="ECO:0000255" key="1">
    <source>
        <dbReference type="HAMAP-Rule" id="MF_00096"/>
    </source>
</evidence>
<evidence type="ECO:0000256" key="2">
    <source>
        <dbReference type="SAM" id="MobiDB-lite"/>
    </source>
</evidence>
<accession>Q4KHE3</accession>
<dbReference type="EMBL" id="CP000076">
    <property type="protein sequence ID" value="AAY90496.1"/>
    <property type="molecule type" value="Genomic_DNA"/>
</dbReference>
<dbReference type="RefSeq" id="WP_011059556.1">
    <property type="nucleotide sequence ID" value="NC_004129.6"/>
</dbReference>
<dbReference type="SMR" id="Q4KHE3"/>
<dbReference type="STRING" id="220664.PFL_1209"/>
<dbReference type="GeneID" id="57474213"/>
<dbReference type="KEGG" id="pfl:PFL_1209"/>
<dbReference type="PATRIC" id="fig|220664.5.peg.1241"/>
<dbReference type="eggNOG" id="COG0249">
    <property type="taxonomic scope" value="Bacteria"/>
</dbReference>
<dbReference type="HOGENOM" id="CLU_002472_4_0_6"/>
<dbReference type="Proteomes" id="UP000008540">
    <property type="component" value="Chromosome"/>
</dbReference>
<dbReference type="GO" id="GO:0005829">
    <property type="term" value="C:cytosol"/>
    <property type="evidence" value="ECO:0007669"/>
    <property type="project" value="TreeGrafter"/>
</dbReference>
<dbReference type="GO" id="GO:0005524">
    <property type="term" value="F:ATP binding"/>
    <property type="evidence" value="ECO:0007669"/>
    <property type="project" value="UniProtKB-UniRule"/>
</dbReference>
<dbReference type="GO" id="GO:0140664">
    <property type="term" value="F:ATP-dependent DNA damage sensor activity"/>
    <property type="evidence" value="ECO:0007669"/>
    <property type="project" value="InterPro"/>
</dbReference>
<dbReference type="GO" id="GO:0003684">
    <property type="term" value="F:damaged DNA binding"/>
    <property type="evidence" value="ECO:0007669"/>
    <property type="project" value="UniProtKB-UniRule"/>
</dbReference>
<dbReference type="GO" id="GO:0030983">
    <property type="term" value="F:mismatched DNA binding"/>
    <property type="evidence" value="ECO:0007669"/>
    <property type="project" value="InterPro"/>
</dbReference>
<dbReference type="GO" id="GO:0006298">
    <property type="term" value="P:mismatch repair"/>
    <property type="evidence" value="ECO:0007669"/>
    <property type="project" value="UniProtKB-UniRule"/>
</dbReference>
<dbReference type="CDD" id="cd03284">
    <property type="entry name" value="ABC_MutS1"/>
    <property type="match status" value="1"/>
</dbReference>
<dbReference type="FunFam" id="1.10.1420.10:FF:000002">
    <property type="entry name" value="DNA mismatch repair protein MutS"/>
    <property type="match status" value="1"/>
</dbReference>
<dbReference type="FunFam" id="3.40.1170.10:FF:000001">
    <property type="entry name" value="DNA mismatch repair protein MutS"/>
    <property type="match status" value="1"/>
</dbReference>
<dbReference type="FunFam" id="3.40.50.300:FF:000283">
    <property type="entry name" value="DNA mismatch repair protein MutS"/>
    <property type="match status" value="1"/>
</dbReference>
<dbReference type="Gene3D" id="1.10.1420.10">
    <property type="match status" value="2"/>
</dbReference>
<dbReference type="Gene3D" id="6.10.140.430">
    <property type="match status" value="1"/>
</dbReference>
<dbReference type="Gene3D" id="3.40.1170.10">
    <property type="entry name" value="DNA repair protein MutS, domain I"/>
    <property type="match status" value="1"/>
</dbReference>
<dbReference type="Gene3D" id="3.30.420.110">
    <property type="entry name" value="MutS, connector domain"/>
    <property type="match status" value="1"/>
</dbReference>
<dbReference type="Gene3D" id="3.40.50.300">
    <property type="entry name" value="P-loop containing nucleotide triphosphate hydrolases"/>
    <property type="match status" value="1"/>
</dbReference>
<dbReference type="HAMAP" id="MF_00096">
    <property type="entry name" value="MutS"/>
    <property type="match status" value="1"/>
</dbReference>
<dbReference type="InterPro" id="IPR005748">
    <property type="entry name" value="DNA_mismatch_repair_MutS"/>
</dbReference>
<dbReference type="InterPro" id="IPR007695">
    <property type="entry name" value="DNA_mismatch_repair_MutS-lik_N"/>
</dbReference>
<dbReference type="InterPro" id="IPR017261">
    <property type="entry name" value="DNA_mismatch_repair_MutS/MSH"/>
</dbReference>
<dbReference type="InterPro" id="IPR000432">
    <property type="entry name" value="DNA_mismatch_repair_MutS_C"/>
</dbReference>
<dbReference type="InterPro" id="IPR007861">
    <property type="entry name" value="DNA_mismatch_repair_MutS_clamp"/>
</dbReference>
<dbReference type="InterPro" id="IPR007696">
    <property type="entry name" value="DNA_mismatch_repair_MutS_core"/>
</dbReference>
<dbReference type="InterPro" id="IPR016151">
    <property type="entry name" value="DNA_mismatch_repair_MutS_N"/>
</dbReference>
<dbReference type="InterPro" id="IPR036187">
    <property type="entry name" value="DNA_mismatch_repair_MutS_sf"/>
</dbReference>
<dbReference type="InterPro" id="IPR007860">
    <property type="entry name" value="DNA_mmatch_repair_MutS_con_dom"/>
</dbReference>
<dbReference type="InterPro" id="IPR045076">
    <property type="entry name" value="MutS"/>
</dbReference>
<dbReference type="InterPro" id="IPR036678">
    <property type="entry name" value="MutS_con_dom_sf"/>
</dbReference>
<dbReference type="InterPro" id="IPR027417">
    <property type="entry name" value="P-loop_NTPase"/>
</dbReference>
<dbReference type="NCBIfam" id="TIGR01070">
    <property type="entry name" value="mutS1"/>
    <property type="match status" value="1"/>
</dbReference>
<dbReference type="NCBIfam" id="NF003810">
    <property type="entry name" value="PRK05399.1"/>
    <property type="match status" value="1"/>
</dbReference>
<dbReference type="PANTHER" id="PTHR11361:SF34">
    <property type="entry name" value="DNA MISMATCH REPAIR PROTEIN MSH1, MITOCHONDRIAL"/>
    <property type="match status" value="1"/>
</dbReference>
<dbReference type="PANTHER" id="PTHR11361">
    <property type="entry name" value="DNA MISMATCH REPAIR PROTEIN MUTS FAMILY MEMBER"/>
    <property type="match status" value="1"/>
</dbReference>
<dbReference type="Pfam" id="PF01624">
    <property type="entry name" value="MutS_I"/>
    <property type="match status" value="1"/>
</dbReference>
<dbReference type="Pfam" id="PF05188">
    <property type="entry name" value="MutS_II"/>
    <property type="match status" value="1"/>
</dbReference>
<dbReference type="Pfam" id="PF05192">
    <property type="entry name" value="MutS_III"/>
    <property type="match status" value="1"/>
</dbReference>
<dbReference type="Pfam" id="PF05190">
    <property type="entry name" value="MutS_IV"/>
    <property type="match status" value="1"/>
</dbReference>
<dbReference type="Pfam" id="PF00488">
    <property type="entry name" value="MutS_V"/>
    <property type="match status" value="1"/>
</dbReference>
<dbReference type="PIRSF" id="PIRSF037677">
    <property type="entry name" value="DNA_mis_repair_Msh6"/>
    <property type="match status" value="1"/>
</dbReference>
<dbReference type="SMART" id="SM00534">
    <property type="entry name" value="MUTSac"/>
    <property type="match status" value="1"/>
</dbReference>
<dbReference type="SMART" id="SM00533">
    <property type="entry name" value="MUTSd"/>
    <property type="match status" value="1"/>
</dbReference>
<dbReference type="SUPFAM" id="SSF55271">
    <property type="entry name" value="DNA repair protein MutS, domain I"/>
    <property type="match status" value="1"/>
</dbReference>
<dbReference type="SUPFAM" id="SSF53150">
    <property type="entry name" value="DNA repair protein MutS, domain II"/>
    <property type="match status" value="1"/>
</dbReference>
<dbReference type="SUPFAM" id="SSF48334">
    <property type="entry name" value="DNA repair protein MutS, domain III"/>
    <property type="match status" value="1"/>
</dbReference>
<dbReference type="SUPFAM" id="SSF52540">
    <property type="entry name" value="P-loop containing nucleoside triphosphate hydrolases"/>
    <property type="match status" value="1"/>
</dbReference>
<dbReference type="PROSITE" id="PS00486">
    <property type="entry name" value="DNA_MISMATCH_REPAIR_2"/>
    <property type="match status" value="1"/>
</dbReference>
<keyword id="KW-0067">ATP-binding</keyword>
<keyword id="KW-0227">DNA damage</keyword>
<keyword id="KW-0234">DNA repair</keyword>
<keyword id="KW-0238">DNA-binding</keyword>
<keyword id="KW-0547">Nucleotide-binding</keyword>
<gene>
    <name evidence="1" type="primary">mutS</name>
    <name type="ordered locus">PFL_1209</name>
</gene>
<sequence>MSKNTSDLSSHTPMMQQYWRLKNQHPDQLMFYRMGDFYEIFYEDAKKAAKLLDITLTARGQSAGQAIPMCGIPYHAAEGYLAKLVKLGESVVICEQVGDPATSKGPVERQVVRIITPGTVSDEALLDERRDNLIAAVLGDERLFGLAVLDITSGNFSVLEIKGWENLLAELERINPVELLIPDDWPQGLPAEKRRGVRRRAPWDFERDSAHKSLCQQFSTQDLKGFGCETLTLAIGAAGCLLSYAKETQRTALPHLRSLRHERLDDTVVLDGASRRNLELDTNLAGGRDNTLQSVVDRCQTAMGSRLLTRWLNRPLRDLKVLEARQSSITCLLDGYRFERLQPQLKEIGDIERILARIGLRNARPRDLARLRDALAALPELQEAMTELEATHLNQLAATTSTYPELAALLAKAIIDNPPAVIRDGGVLKTGYDAELDELQSLSENAGQFLIDLEAREKARTGLANLKVGYNRIHGYFIELPSKQAEQAPADYIRRQTLKGAERFITPELKEFEDKALSAKSRALAREKMLYDALLETLISHLPPLQDTAGALAELDVLSNLAERALNLDLNCPRFVSEPCMRITQGRHPVVEQVLTTPFVANDLSLDDNTRMLVITGPNMGGKSTYMRQTALIVLLAHIGSFVPAASCELSLVDRIFTRIGSSDDLAGGRSTFMVEMSETANILHNATERSLVLMDEVGRGTSTFDGLSLAWAAAERLAHLRAYTLFATHYFELTVLPESEPLVANVHLNATEHNERIVFLHHVLPGPASQSYGLAVAQLAGVPSAVITRAREHLSRLETTSLPHEVAPQAPGKPSVPQQSDMFASLPHPVLDDLAKLDLDDMTPRRALEMLYTLKTRI</sequence>